<accession>A0PQT1</accession>
<dbReference type="EC" id="6.3.1.19" evidence="1"/>
<dbReference type="EMBL" id="CP000325">
    <property type="protein sequence ID" value="ABL04700.1"/>
    <property type="molecule type" value="Genomic_DNA"/>
</dbReference>
<dbReference type="SMR" id="A0PQT1"/>
<dbReference type="MEROPS" id="U72.001"/>
<dbReference type="KEGG" id="mul:MUL_2329"/>
<dbReference type="eggNOG" id="COG0638">
    <property type="taxonomic scope" value="Bacteria"/>
</dbReference>
<dbReference type="HOGENOM" id="CLU_040524_0_1_11"/>
<dbReference type="UniPathway" id="UPA00997"/>
<dbReference type="UniPathway" id="UPA00998"/>
<dbReference type="Proteomes" id="UP000000765">
    <property type="component" value="Chromosome"/>
</dbReference>
<dbReference type="GO" id="GO:0005524">
    <property type="term" value="F:ATP binding"/>
    <property type="evidence" value="ECO:0007669"/>
    <property type="project" value="UniProtKB-UniRule"/>
</dbReference>
<dbReference type="GO" id="GO:0016879">
    <property type="term" value="F:ligase activity, forming carbon-nitrogen bonds"/>
    <property type="evidence" value="ECO:0007669"/>
    <property type="project" value="InterPro"/>
</dbReference>
<dbReference type="GO" id="GO:0000287">
    <property type="term" value="F:magnesium ion binding"/>
    <property type="evidence" value="ECO:0007669"/>
    <property type="project" value="UniProtKB-UniRule"/>
</dbReference>
<dbReference type="GO" id="GO:0019787">
    <property type="term" value="F:ubiquitin-like protein transferase activity"/>
    <property type="evidence" value="ECO:0007669"/>
    <property type="project" value="UniProtKB-UniRule"/>
</dbReference>
<dbReference type="GO" id="GO:0019941">
    <property type="term" value="P:modification-dependent protein catabolic process"/>
    <property type="evidence" value="ECO:0007669"/>
    <property type="project" value="UniProtKB-UniRule"/>
</dbReference>
<dbReference type="GO" id="GO:0010498">
    <property type="term" value="P:proteasomal protein catabolic process"/>
    <property type="evidence" value="ECO:0007669"/>
    <property type="project" value="UniProtKB-UniRule"/>
</dbReference>
<dbReference type="GO" id="GO:0070490">
    <property type="term" value="P:protein pupylation"/>
    <property type="evidence" value="ECO:0007669"/>
    <property type="project" value="UniProtKB-UniRule"/>
</dbReference>
<dbReference type="HAMAP" id="MF_02111">
    <property type="entry name" value="Pup_ligase"/>
    <property type="match status" value="1"/>
</dbReference>
<dbReference type="InterPro" id="IPR022279">
    <property type="entry name" value="Pup_ligase"/>
</dbReference>
<dbReference type="InterPro" id="IPR004347">
    <property type="entry name" value="Pup_ligase/deamidase"/>
</dbReference>
<dbReference type="NCBIfam" id="TIGR03686">
    <property type="entry name" value="pupylate_PafA"/>
    <property type="match status" value="1"/>
</dbReference>
<dbReference type="PANTHER" id="PTHR42307">
    <property type="entry name" value="PUP DEAMIDASE/DEPUPYLASE"/>
    <property type="match status" value="1"/>
</dbReference>
<dbReference type="PANTHER" id="PTHR42307:SF3">
    <property type="entry name" value="PUP--PROTEIN LIGASE"/>
    <property type="match status" value="1"/>
</dbReference>
<dbReference type="Pfam" id="PF03136">
    <property type="entry name" value="Pup_ligase"/>
    <property type="match status" value="1"/>
</dbReference>
<dbReference type="PIRSF" id="PIRSF018077">
    <property type="entry name" value="UCP018077"/>
    <property type="match status" value="1"/>
</dbReference>
<feature type="chain" id="PRO_0000395938" description="Pup--protein ligase">
    <location>
        <begin position="1"/>
        <end position="452"/>
    </location>
</feature>
<feature type="active site" description="Proton acceptor" evidence="1">
    <location>
        <position position="57"/>
    </location>
</feature>
<feature type="binding site" evidence="1">
    <location>
        <position position="9"/>
    </location>
    <ligand>
        <name>Mg(2+)</name>
        <dbReference type="ChEBI" id="CHEBI:18420"/>
    </ligand>
</feature>
<feature type="binding site" evidence="1">
    <location>
        <position position="53"/>
    </location>
    <ligand>
        <name>ATP</name>
        <dbReference type="ChEBI" id="CHEBI:30616"/>
    </ligand>
</feature>
<feature type="binding site" evidence="1">
    <location>
        <position position="55"/>
    </location>
    <ligand>
        <name>Mg(2+)</name>
        <dbReference type="ChEBI" id="CHEBI:18420"/>
    </ligand>
</feature>
<feature type="binding site" evidence="1">
    <location>
        <position position="63"/>
    </location>
    <ligand>
        <name>Mg(2+)</name>
        <dbReference type="ChEBI" id="CHEBI:18420"/>
    </ligand>
</feature>
<feature type="binding site" evidence="1">
    <location>
        <position position="66"/>
    </location>
    <ligand>
        <name>ATP</name>
        <dbReference type="ChEBI" id="CHEBI:30616"/>
    </ligand>
</feature>
<feature type="binding site" evidence="1">
    <location>
        <position position="419"/>
    </location>
    <ligand>
        <name>ATP</name>
        <dbReference type="ChEBI" id="CHEBI:30616"/>
    </ligand>
</feature>
<organism>
    <name type="scientific">Mycobacterium ulcerans (strain Agy99)</name>
    <dbReference type="NCBI Taxonomy" id="362242"/>
    <lineage>
        <taxon>Bacteria</taxon>
        <taxon>Bacillati</taxon>
        <taxon>Actinomycetota</taxon>
        <taxon>Actinomycetes</taxon>
        <taxon>Mycobacteriales</taxon>
        <taxon>Mycobacteriaceae</taxon>
        <taxon>Mycobacterium</taxon>
        <taxon>Mycobacterium ulcerans group</taxon>
    </lineage>
</organism>
<protein>
    <recommendedName>
        <fullName evidence="1">Pup--protein ligase</fullName>
        <ecNumber evidence="1">6.3.1.19</ecNumber>
    </recommendedName>
    <alternativeName>
        <fullName evidence="1">Proteasome accessory factor A</fullName>
    </alternativeName>
    <alternativeName>
        <fullName evidence="1">Pup-conjugating enzyme</fullName>
    </alternativeName>
</protein>
<keyword id="KW-0067">ATP-binding</keyword>
<keyword id="KW-0436">Ligase</keyword>
<keyword id="KW-0460">Magnesium</keyword>
<keyword id="KW-0479">Metal-binding</keyword>
<keyword id="KW-0547">Nucleotide-binding</keyword>
<keyword id="KW-0833">Ubl conjugation pathway</keyword>
<proteinExistence type="inferred from homology"/>
<evidence type="ECO:0000255" key="1">
    <source>
        <dbReference type="HAMAP-Rule" id="MF_02111"/>
    </source>
</evidence>
<reference key="1">
    <citation type="journal article" date="2007" name="Genome Res.">
        <title>Reductive evolution and niche adaptation inferred from the genome of Mycobacterium ulcerans, the causative agent of Buruli ulcer.</title>
        <authorList>
            <person name="Stinear T.P."/>
            <person name="Seemann T."/>
            <person name="Pidot S."/>
            <person name="Frigui W."/>
            <person name="Reysset G."/>
            <person name="Garnier T."/>
            <person name="Meurice G."/>
            <person name="Simon D."/>
            <person name="Bouchier C."/>
            <person name="Ma L."/>
            <person name="Tichit M."/>
            <person name="Porter J.L."/>
            <person name="Ryan J."/>
            <person name="Johnson P.D.R."/>
            <person name="Davies J.K."/>
            <person name="Jenkin G.A."/>
            <person name="Small P.L.C."/>
            <person name="Jones L.M."/>
            <person name="Tekaia F."/>
            <person name="Laval F."/>
            <person name="Daffe M."/>
            <person name="Parkhill J."/>
            <person name="Cole S.T."/>
        </authorList>
    </citation>
    <scope>NUCLEOTIDE SEQUENCE [LARGE SCALE GENOMIC DNA]</scope>
    <source>
        <strain>Agy99</strain>
    </source>
</reference>
<sequence>MQRRIMGIETEFGVTCTFHGHRRLSPDEVARYLFRRVVSWGRSSNVFLRNGARLYLDVGSHPEYATAECDSLVQLVTHDRAGEWVLEDLLVDAEQRLADEGIGGDIYLFKNNTDSAGNSYGCHENYLIVRAGEFSRISDVLLPFLVTRQLICGAGKVLQTPKAATFCLSQRAEHIWEGVSSATTRSRPIINTRDEPHADAEKYRRLHVIVGDSNMCETTTMLKVGTASLVLEMIEAGVPFRDFSLDNPIRAIREVSHDVTGRRPVRLAGGRQASALDIQREYYSRAVEHLQTREPNAQVEQVVDLWGRQLDAVESQDFAKVDTEIDWVIKRKLFQRYQDRYNMELSDPKIAQLDLAYHDIKRGRGVFDLLQRKGLATRVTTDEEIADAVDNPPQTTRARLRGEFISAAQAAGRDFTVDWVHLKLNDQAQRTVLCKDPFRAVDERVKRLIASM</sequence>
<gene>
    <name evidence="1" type="primary">pafA</name>
    <name type="ordered locus">MUL_2329</name>
</gene>
<comment type="function">
    <text evidence="1">Catalyzes the covalent attachment of the prokaryotic ubiquitin-like protein modifier Pup to the proteasomal substrate proteins, thereby targeting them for proteasomal degradation. This tagging system is termed pupylation. The ligation reaction involves the side-chain carboxylate of the C-terminal glutamate of Pup and the side-chain amino group of a substrate lysine.</text>
</comment>
<comment type="catalytic activity">
    <reaction evidence="1">
        <text>ATP + [prokaryotic ubiquitin-like protein]-L-glutamate + [protein]-L-lysine = ADP + phosphate + N(6)-([prokaryotic ubiquitin-like protein]-gamma-L-glutamyl)-[protein]-L-lysine.</text>
        <dbReference type="EC" id="6.3.1.19"/>
    </reaction>
</comment>
<comment type="pathway">
    <text evidence="1">Protein degradation; proteasomal Pup-dependent pathway.</text>
</comment>
<comment type="pathway">
    <text evidence="1">Protein modification; protein pupylation.</text>
</comment>
<comment type="miscellaneous">
    <text evidence="1">The reaction mechanism probably proceeds via the activation of Pup by phosphorylation of its C-terminal glutamate, which is then subject to nucleophilic attack by the substrate lysine, resulting in an isopeptide bond and the release of phosphate as a good leaving group.</text>
</comment>
<comment type="similarity">
    <text evidence="1">Belongs to the Pup ligase/Pup deamidase family. Pup-conjugating enzyme subfamily.</text>
</comment>
<name>PAFA_MYCUA</name>